<feature type="chain" id="PRO_0000296576" description="Large ribosomal subunit protein bL32">
    <location>
        <begin position="1"/>
        <end position="60"/>
    </location>
</feature>
<feature type="region of interest" description="Disordered" evidence="2">
    <location>
        <begin position="1"/>
        <end position="22"/>
    </location>
</feature>
<feature type="compositionally biased region" description="Basic residues" evidence="2">
    <location>
        <begin position="7"/>
        <end position="20"/>
    </location>
</feature>
<reference key="1">
    <citation type="journal article" date="2006" name="Proc. Natl. Acad. Sci. U.S.A.">
        <title>Molecular genetic anatomy of inter- and intraserotype variation in the human bacterial pathogen group A Streptococcus.</title>
        <authorList>
            <person name="Beres S.B."/>
            <person name="Richter E.W."/>
            <person name="Nagiec M.J."/>
            <person name="Sumby P."/>
            <person name="Porcella S.F."/>
            <person name="DeLeo F.R."/>
            <person name="Musser J.M."/>
        </authorList>
    </citation>
    <scope>NUCLEOTIDE SEQUENCE [LARGE SCALE GENOMIC DNA]</scope>
    <source>
        <strain>MGAS10270</strain>
    </source>
</reference>
<sequence>MAVPARHTSKAKKNKRRTHYKLTAPSVQFDETTGDYSRSHRVSLKGYYKGRKIAKANEAK</sequence>
<dbReference type="EMBL" id="CP000260">
    <property type="protein sequence ID" value="ABF34972.1"/>
    <property type="molecule type" value="Genomic_DNA"/>
</dbReference>
<dbReference type="RefSeq" id="WP_000290414.1">
    <property type="nucleotide sequence ID" value="NZ_CVUH01000011.1"/>
</dbReference>
<dbReference type="SMR" id="Q1JEG1"/>
<dbReference type="GeneID" id="83689722"/>
<dbReference type="KEGG" id="sph:MGAS10270_Spy1907"/>
<dbReference type="HOGENOM" id="CLU_129084_2_3_9"/>
<dbReference type="Proteomes" id="UP000002436">
    <property type="component" value="Chromosome"/>
</dbReference>
<dbReference type="GO" id="GO:0015934">
    <property type="term" value="C:large ribosomal subunit"/>
    <property type="evidence" value="ECO:0007669"/>
    <property type="project" value="InterPro"/>
</dbReference>
<dbReference type="GO" id="GO:0003735">
    <property type="term" value="F:structural constituent of ribosome"/>
    <property type="evidence" value="ECO:0007669"/>
    <property type="project" value="InterPro"/>
</dbReference>
<dbReference type="GO" id="GO:0006412">
    <property type="term" value="P:translation"/>
    <property type="evidence" value="ECO:0007669"/>
    <property type="project" value="UniProtKB-UniRule"/>
</dbReference>
<dbReference type="HAMAP" id="MF_00340">
    <property type="entry name" value="Ribosomal_bL32"/>
    <property type="match status" value="1"/>
</dbReference>
<dbReference type="InterPro" id="IPR002677">
    <property type="entry name" value="Ribosomal_bL32"/>
</dbReference>
<dbReference type="InterPro" id="IPR044957">
    <property type="entry name" value="Ribosomal_bL32_bact"/>
</dbReference>
<dbReference type="InterPro" id="IPR011332">
    <property type="entry name" value="Ribosomal_zn-bd"/>
</dbReference>
<dbReference type="NCBIfam" id="TIGR01031">
    <property type="entry name" value="rpmF_bact"/>
    <property type="match status" value="1"/>
</dbReference>
<dbReference type="PANTHER" id="PTHR35534">
    <property type="entry name" value="50S RIBOSOMAL PROTEIN L32"/>
    <property type="match status" value="1"/>
</dbReference>
<dbReference type="PANTHER" id="PTHR35534:SF1">
    <property type="entry name" value="LARGE RIBOSOMAL SUBUNIT PROTEIN BL32"/>
    <property type="match status" value="1"/>
</dbReference>
<dbReference type="Pfam" id="PF01783">
    <property type="entry name" value="Ribosomal_L32p"/>
    <property type="match status" value="1"/>
</dbReference>
<dbReference type="SUPFAM" id="SSF57829">
    <property type="entry name" value="Zn-binding ribosomal proteins"/>
    <property type="match status" value="1"/>
</dbReference>
<proteinExistence type="inferred from homology"/>
<name>RL32_STRPD</name>
<accession>Q1JEG1</accession>
<evidence type="ECO:0000255" key="1">
    <source>
        <dbReference type="HAMAP-Rule" id="MF_00340"/>
    </source>
</evidence>
<evidence type="ECO:0000256" key="2">
    <source>
        <dbReference type="SAM" id="MobiDB-lite"/>
    </source>
</evidence>
<evidence type="ECO:0000305" key="3"/>
<keyword id="KW-0687">Ribonucleoprotein</keyword>
<keyword id="KW-0689">Ribosomal protein</keyword>
<organism>
    <name type="scientific">Streptococcus pyogenes serotype M2 (strain MGAS10270)</name>
    <dbReference type="NCBI Taxonomy" id="370552"/>
    <lineage>
        <taxon>Bacteria</taxon>
        <taxon>Bacillati</taxon>
        <taxon>Bacillota</taxon>
        <taxon>Bacilli</taxon>
        <taxon>Lactobacillales</taxon>
        <taxon>Streptococcaceae</taxon>
        <taxon>Streptococcus</taxon>
    </lineage>
</organism>
<protein>
    <recommendedName>
        <fullName evidence="1">Large ribosomal subunit protein bL32</fullName>
    </recommendedName>
    <alternativeName>
        <fullName evidence="3">50S ribosomal protein L32</fullName>
    </alternativeName>
</protein>
<gene>
    <name evidence="1" type="primary">rpmF</name>
    <name type="ordered locus">MGAS10270_Spy1907</name>
</gene>
<comment type="similarity">
    <text evidence="1">Belongs to the bacterial ribosomal protein bL32 family.</text>
</comment>